<protein>
    <recommendedName>
        <fullName evidence="1">Gamma-glutamyl phosphate reductase</fullName>
        <shortName evidence="1">GPR</shortName>
        <ecNumber evidence="1">1.2.1.41</ecNumber>
    </recommendedName>
    <alternativeName>
        <fullName evidence="1">Glutamate-5-semialdehyde dehydrogenase</fullName>
    </alternativeName>
    <alternativeName>
        <fullName evidence="1">Glutamyl-gamma-semialdehyde dehydrogenase</fullName>
        <shortName evidence="1">GSA dehydrogenase</shortName>
    </alternativeName>
</protein>
<accession>Q8XHA7</accession>
<gene>
    <name evidence="1" type="primary">proA</name>
    <name type="ordered locus">CPE2578</name>
</gene>
<proteinExistence type="inferred from homology"/>
<evidence type="ECO:0000255" key="1">
    <source>
        <dbReference type="HAMAP-Rule" id="MF_00412"/>
    </source>
</evidence>
<keyword id="KW-0028">Amino-acid biosynthesis</keyword>
<keyword id="KW-0963">Cytoplasm</keyword>
<keyword id="KW-0521">NADP</keyword>
<keyword id="KW-0560">Oxidoreductase</keyword>
<keyword id="KW-0641">Proline biosynthesis</keyword>
<keyword id="KW-1185">Reference proteome</keyword>
<name>PROA_CLOPE</name>
<organism>
    <name type="scientific">Clostridium perfringens (strain 13 / Type A)</name>
    <dbReference type="NCBI Taxonomy" id="195102"/>
    <lineage>
        <taxon>Bacteria</taxon>
        <taxon>Bacillati</taxon>
        <taxon>Bacillota</taxon>
        <taxon>Clostridia</taxon>
        <taxon>Eubacteriales</taxon>
        <taxon>Clostridiaceae</taxon>
        <taxon>Clostridium</taxon>
    </lineage>
</organism>
<feature type="chain" id="PRO_0000189715" description="Gamma-glutamyl phosphate reductase">
    <location>
        <begin position="1"/>
        <end position="415"/>
    </location>
</feature>
<dbReference type="EC" id="1.2.1.41" evidence="1"/>
<dbReference type="EMBL" id="BA000016">
    <property type="protein sequence ID" value="BAB82284.1"/>
    <property type="molecule type" value="Genomic_DNA"/>
</dbReference>
<dbReference type="RefSeq" id="WP_011010972.1">
    <property type="nucleotide sequence ID" value="NC_003366.1"/>
</dbReference>
<dbReference type="SMR" id="Q8XHA7"/>
<dbReference type="STRING" id="195102.gene:10491912"/>
<dbReference type="KEGG" id="cpe:CPE2578"/>
<dbReference type="HOGENOM" id="CLU_030231_0_0_9"/>
<dbReference type="UniPathway" id="UPA00098">
    <property type="reaction ID" value="UER00360"/>
</dbReference>
<dbReference type="Proteomes" id="UP000000818">
    <property type="component" value="Chromosome"/>
</dbReference>
<dbReference type="GO" id="GO:0005737">
    <property type="term" value="C:cytoplasm"/>
    <property type="evidence" value="ECO:0007669"/>
    <property type="project" value="UniProtKB-SubCell"/>
</dbReference>
<dbReference type="GO" id="GO:0004350">
    <property type="term" value="F:glutamate-5-semialdehyde dehydrogenase activity"/>
    <property type="evidence" value="ECO:0007669"/>
    <property type="project" value="UniProtKB-UniRule"/>
</dbReference>
<dbReference type="GO" id="GO:0050661">
    <property type="term" value="F:NADP binding"/>
    <property type="evidence" value="ECO:0007669"/>
    <property type="project" value="InterPro"/>
</dbReference>
<dbReference type="GO" id="GO:0055129">
    <property type="term" value="P:L-proline biosynthetic process"/>
    <property type="evidence" value="ECO:0007669"/>
    <property type="project" value="UniProtKB-UniRule"/>
</dbReference>
<dbReference type="CDD" id="cd07079">
    <property type="entry name" value="ALDH_F18-19_ProA-GPR"/>
    <property type="match status" value="1"/>
</dbReference>
<dbReference type="FunFam" id="3.40.309.10:FF:000006">
    <property type="entry name" value="Gamma-glutamyl phosphate reductase"/>
    <property type="match status" value="1"/>
</dbReference>
<dbReference type="Gene3D" id="3.40.605.10">
    <property type="entry name" value="Aldehyde Dehydrogenase, Chain A, domain 1"/>
    <property type="match status" value="1"/>
</dbReference>
<dbReference type="Gene3D" id="3.40.309.10">
    <property type="entry name" value="Aldehyde Dehydrogenase, Chain A, domain 2"/>
    <property type="match status" value="1"/>
</dbReference>
<dbReference type="HAMAP" id="MF_00412">
    <property type="entry name" value="ProA"/>
    <property type="match status" value="1"/>
</dbReference>
<dbReference type="InterPro" id="IPR016161">
    <property type="entry name" value="Ald_DH/histidinol_DH"/>
</dbReference>
<dbReference type="InterPro" id="IPR016163">
    <property type="entry name" value="Ald_DH_C"/>
</dbReference>
<dbReference type="InterPro" id="IPR016162">
    <property type="entry name" value="Ald_DH_N"/>
</dbReference>
<dbReference type="InterPro" id="IPR015590">
    <property type="entry name" value="Aldehyde_DH_dom"/>
</dbReference>
<dbReference type="InterPro" id="IPR020593">
    <property type="entry name" value="G-glutamylP_reductase_CS"/>
</dbReference>
<dbReference type="InterPro" id="IPR012134">
    <property type="entry name" value="Glu-5-SA_DH"/>
</dbReference>
<dbReference type="InterPro" id="IPR000965">
    <property type="entry name" value="GPR_dom"/>
</dbReference>
<dbReference type="NCBIfam" id="NF001221">
    <property type="entry name" value="PRK00197.1"/>
    <property type="match status" value="1"/>
</dbReference>
<dbReference type="NCBIfam" id="TIGR00407">
    <property type="entry name" value="proA"/>
    <property type="match status" value="1"/>
</dbReference>
<dbReference type="PANTHER" id="PTHR11063:SF8">
    <property type="entry name" value="DELTA-1-PYRROLINE-5-CARBOXYLATE SYNTHASE"/>
    <property type="match status" value="1"/>
</dbReference>
<dbReference type="PANTHER" id="PTHR11063">
    <property type="entry name" value="GLUTAMATE SEMIALDEHYDE DEHYDROGENASE"/>
    <property type="match status" value="1"/>
</dbReference>
<dbReference type="Pfam" id="PF00171">
    <property type="entry name" value="Aldedh"/>
    <property type="match status" value="1"/>
</dbReference>
<dbReference type="PIRSF" id="PIRSF000151">
    <property type="entry name" value="GPR"/>
    <property type="match status" value="1"/>
</dbReference>
<dbReference type="SUPFAM" id="SSF53720">
    <property type="entry name" value="ALDH-like"/>
    <property type="match status" value="1"/>
</dbReference>
<dbReference type="PROSITE" id="PS01223">
    <property type="entry name" value="PROA"/>
    <property type="match status" value="1"/>
</dbReference>
<reference key="1">
    <citation type="journal article" date="2002" name="Proc. Natl. Acad. Sci. U.S.A.">
        <title>Complete genome sequence of Clostridium perfringens, an anaerobic flesh-eater.</title>
        <authorList>
            <person name="Shimizu T."/>
            <person name="Ohtani K."/>
            <person name="Hirakawa H."/>
            <person name="Ohshima K."/>
            <person name="Yamashita A."/>
            <person name="Shiba T."/>
            <person name="Ogasawara N."/>
            <person name="Hattori M."/>
            <person name="Kuhara S."/>
            <person name="Hayashi H."/>
        </authorList>
    </citation>
    <scope>NUCLEOTIDE SEQUENCE [LARGE SCALE GENOMIC DNA]</scope>
    <source>
        <strain>13 / Type A</strain>
    </source>
</reference>
<sequence>MNNELIIKGKKAKEASYTLSFASTNEKDNGLLKISEFLIKRCDEILEENKKDLEKAIEKGTSNAMLDRLKLDEERVKSIANAVADVVKLDDPIGEVTSMFKRPNGLRIGVQRVPLGVVGIIYEARPNVTADAAALCLKTGNAVILRGGSEAINSNLKIVEIISDALKEAGLPEGSVQILEDTSRETATDFMRLNDYLDVLIPRGGAGLIKAVVNNATVPVIETGVGNCHIYIDDEADINMGVDIIVNAKTSRPAVCNAAEKLLVNEKIAEEFLPVAIKALKEKGVEIRGCEKTKAIVNDINLATEEDWGKEYLDYILGVKVVKDLDEAISHINKYGTKHSESIVTKNYFNSEKFLQRVDAAAVYVNASTRFTDGGEFGFGAEIGISTQKLHARGPMGLKELTTNKYIIYGNGQIR</sequence>
<comment type="function">
    <text evidence="1">Catalyzes the NADPH-dependent reduction of L-glutamate 5-phosphate into L-glutamate 5-semialdehyde and phosphate. The product spontaneously undergoes cyclization to form 1-pyrroline-5-carboxylate.</text>
</comment>
<comment type="catalytic activity">
    <reaction evidence="1">
        <text>L-glutamate 5-semialdehyde + phosphate + NADP(+) = L-glutamyl 5-phosphate + NADPH + H(+)</text>
        <dbReference type="Rhea" id="RHEA:19541"/>
        <dbReference type="ChEBI" id="CHEBI:15378"/>
        <dbReference type="ChEBI" id="CHEBI:43474"/>
        <dbReference type="ChEBI" id="CHEBI:57783"/>
        <dbReference type="ChEBI" id="CHEBI:58066"/>
        <dbReference type="ChEBI" id="CHEBI:58274"/>
        <dbReference type="ChEBI" id="CHEBI:58349"/>
        <dbReference type="EC" id="1.2.1.41"/>
    </reaction>
</comment>
<comment type="pathway">
    <text evidence="1">Amino-acid biosynthesis; L-proline biosynthesis; L-glutamate 5-semialdehyde from L-glutamate: step 2/2.</text>
</comment>
<comment type="subcellular location">
    <subcellularLocation>
        <location evidence="1">Cytoplasm</location>
    </subcellularLocation>
</comment>
<comment type="similarity">
    <text evidence="1">Belongs to the gamma-glutamyl phosphate reductase family.</text>
</comment>